<name>H17B6_HUMAN</name>
<gene>
    <name type="primary">HSD17B6</name>
    <name type="synonym">RODH</name>
    <name type="synonym">SDR9C6</name>
</gene>
<keyword id="KW-0256">Endoplasmic reticulum</keyword>
<keyword id="KW-0967">Endosome</keyword>
<keyword id="KW-0325">Glycoprotein</keyword>
<keyword id="KW-0443">Lipid metabolism</keyword>
<keyword id="KW-0472">Membrane</keyword>
<keyword id="KW-0492">Microsome</keyword>
<keyword id="KW-0520">NAD</keyword>
<keyword id="KW-0560">Oxidoreductase</keyword>
<keyword id="KW-1267">Proteomics identification</keyword>
<keyword id="KW-1185">Reference proteome</keyword>
<keyword id="KW-0732">Signal</keyword>
<keyword id="KW-0753">Steroid metabolism</keyword>
<reference key="1">
    <citation type="journal article" date="1997" name="J. Biol. Chem.">
        <title>Expression cloning and characterization of oxidative 17beta- and 3alpha-hydroxysteroid dehydrogenases from rat and human prostate.</title>
        <authorList>
            <person name="Biswas M.G."/>
            <person name="Russell D.W."/>
        </authorList>
    </citation>
    <scope>NUCLEOTIDE SEQUENCE [MRNA]</scope>
    <scope>TISSUE SPECIFICITY</scope>
    <source>
        <tissue>Prostate</tissue>
    </source>
</reference>
<reference key="2">
    <citation type="journal article" date="2000" name="J. Biol. Chem.">
        <title>Molecular characterization of a first human 3(alpha--&gt;beta)-hydroxysteroid epimerase.</title>
        <authorList>
            <person name="Huang X.-F."/>
            <person name="Luu-The V."/>
        </authorList>
    </citation>
    <scope>NUCLEOTIDE SEQUENCE [MRNA]</scope>
    <scope>FUNCTION</scope>
    <scope>CATALYTIC ACTIVITY</scope>
    <scope>BIOPHYSICOCHEMICAL PROPERTIES</scope>
    <scope>TISSUE SPECIFICITY</scope>
    <source>
        <tissue>Liver</tissue>
    </source>
</reference>
<reference key="3">
    <citation type="journal article" date="2004" name="Genome Res.">
        <title>The status, quality, and expansion of the NIH full-length cDNA project: the Mammalian Gene Collection (MGC).</title>
        <authorList>
            <consortium name="The MGC Project Team"/>
        </authorList>
    </citation>
    <scope>NUCLEOTIDE SEQUENCE [LARGE SCALE MRNA]</scope>
    <source>
        <tissue>Lung</tissue>
    </source>
</reference>
<reference key="4">
    <citation type="journal article" date="2001" name="Arch. Biochem. Biophys.">
        <title>Further characterization of human microsomal 3alpha-hydroxysteroid dehydrogenase.</title>
        <authorList>
            <person name="Chetyrkin S.V."/>
            <person name="Hu J."/>
            <person name="Gough W.H."/>
            <person name="Dumaual N."/>
            <person name="Kedishvili N.Y."/>
        </authorList>
    </citation>
    <scope>FUNCTION</scope>
    <scope>CATALYTIC ACTIVITY</scope>
    <scope>BIOPHYSICOCHEMICAL PROPERTIES</scope>
    <scope>SUBCELLULAR LOCATION</scope>
</reference>
<reference key="5">
    <citation type="journal article" date="2001" name="Biochim. Biophys. Acta">
        <title>Gene structure, chromosomal localization and analysis of 3-ketosteroid reductase activity of the human 3(alpha--&gt;beta)-hydroxysteroid epimerase.</title>
        <authorList>
            <person name="Huang X.-F."/>
            <person name="Luu-The V."/>
        </authorList>
    </citation>
    <scope>FUNCTION</scope>
    <scope>CATALYTIC ACTIVITY</scope>
</reference>
<reference key="6">
    <citation type="journal article" date="2014" name="J. Proteomics">
        <title>An enzyme assisted RP-RPLC approach for in-depth analysis of human liver phosphoproteome.</title>
        <authorList>
            <person name="Bian Y."/>
            <person name="Song C."/>
            <person name="Cheng K."/>
            <person name="Dong M."/>
            <person name="Wang F."/>
            <person name="Huang J."/>
            <person name="Sun D."/>
            <person name="Wang L."/>
            <person name="Ye M."/>
            <person name="Zou H."/>
        </authorList>
    </citation>
    <scope>IDENTIFICATION BY MASS SPECTROMETRY [LARGE SCALE ANALYSIS]</scope>
    <source>
        <tissue>Liver</tissue>
    </source>
</reference>
<feature type="signal peptide" evidence="3">
    <location>
        <begin position="1"/>
        <end position="17"/>
    </location>
</feature>
<feature type="chain" id="PRO_0000303211" description="17-beta-hydroxysteroid dehydrogenase type 6">
    <location>
        <begin position="18"/>
        <end position="317"/>
    </location>
</feature>
<feature type="active site" description="Proton acceptor" evidence="4">
    <location>
        <position position="176"/>
    </location>
</feature>
<feature type="binding site" evidence="1">
    <location>
        <begin position="33"/>
        <end position="57"/>
    </location>
    <ligand>
        <name>NAD(+)</name>
        <dbReference type="ChEBI" id="CHEBI:57540"/>
    </ligand>
</feature>
<feature type="binding site" evidence="3">
    <location>
        <position position="164"/>
    </location>
    <ligand>
        <name>substrate</name>
    </ligand>
</feature>
<feature type="glycosylation site" description="N-linked (GlcNAc...) asparagine" evidence="3">
    <location>
        <position position="161"/>
    </location>
</feature>
<feature type="glycosylation site" description="N-linked (GlcNAc...) asparagine" evidence="3">
    <location>
        <position position="215"/>
    </location>
</feature>
<feature type="glycosylation site" description="N-linked (GlcNAc...) asparagine" evidence="3">
    <location>
        <position position="256"/>
    </location>
</feature>
<feature type="sequence conflict" description="In Ref. 1; AAB88252." evidence="9" ref="1">
    <original>E</original>
    <variation>D</variation>
    <location>
        <position position="63"/>
    </location>
</feature>
<feature type="sequence conflict" description="In Ref. 1; AAB88252." evidence="9" ref="1">
    <original>G</original>
    <variation>R</variation>
    <location>
        <position position="105"/>
    </location>
</feature>
<protein>
    <recommendedName>
        <fullName>17-beta-hydroxysteroid dehydrogenase type 6</fullName>
        <shortName>17-beta-HSD 6</shortName>
        <shortName>17-beta-HSD6</shortName>
        <ecNumber evidence="5 6">1.1.1.105</ecNumber>
        <ecNumber evidence="5 6">1.1.1.209</ecNumber>
        <ecNumber evidence="2">1.1.1.239</ecNumber>
        <ecNumber evidence="6">1.1.1.53</ecNumber>
        <ecNumber evidence="2">1.1.1.62</ecNumber>
    </recommendedName>
    <alternativeName>
        <fullName>3-alpha-&gt;beta-hydroxysteroid epimerase</fullName>
        <shortName>3-alpha-&gt;beta-HSE</shortName>
    </alternativeName>
    <alternativeName>
        <fullName>Oxidative 3-alpha hydroxysteroid dehydrogenase</fullName>
    </alternativeName>
    <alternativeName>
        <fullName>Short chain dehydrogenase/reductase family 9C member 6</fullName>
    </alternativeName>
</protein>
<comment type="function">
    <text evidence="5 6 7">NAD-dependent oxidoreductase with broad substrate specificity that shows both oxidative and reductive activity (in vitro). Has 17-beta-hydroxysteroid dehydrogenase activity towards various steroids (in vitro). Converts 5-alpha-androstan-3-alpha,17-beta-diol to androsterone and estradiol to estrone (in vitro). Has 3-alpha-hydroxysteroid dehydrogenase activity towards androsterone (in vitro). Has retinol dehydrogenase activity towards all-trans-retinol (in vitro). Can convert androsterone to epi-androsterone. Androsterone is first oxidized to 5-alpha-androstane-3,17-dione and then reduced to epi-andosterone. Can act on both C-19 and C-21 3-alpha-hydroxysteroids.</text>
</comment>
<comment type="catalytic activity">
    <reaction evidence="5 6">
        <text>all-trans-retinol--[retinol-binding protein] + NAD(+) = all-trans-retinal--[retinol-binding protein] + NADH + H(+)</text>
        <dbReference type="Rhea" id="RHEA:48488"/>
        <dbReference type="Rhea" id="RHEA-COMP:14428"/>
        <dbReference type="Rhea" id="RHEA-COMP:14430"/>
        <dbReference type="ChEBI" id="CHEBI:15378"/>
        <dbReference type="ChEBI" id="CHEBI:17336"/>
        <dbReference type="ChEBI" id="CHEBI:17898"/>
        <dbReference type="ChEBI" id="CHEBI:57540"/>
        <dbReference type="ChEBI" id="CHEBI:57945"/>
        <dbReference type="ChEBI" id="CHEBI:83228"/>
        <dbReference type="EC" id="1.1.1.105"/>
    </reaction>
</comment>
<comment type="catalytic activity">
    <reaction evidence="5 6">
        <text>all-trans-retinol + NAD(+) = all-trans-retinal + NADH + H(+)</text>
        <dbReference type="Rhea" id="RHEA:21284"/>
        <dbReference type="ChEBI" id="CHEBI:15378"/>
        <dbReference type="ChEBI" id="CHEBI:17336"/>
        <dbReference type="ChEBI" id="CHEBI:17898"/>
        <dbReference type="ChEBI" id="CHEBI:57540"/>
        <dbReference type="ChEBI" id="CHEBI:57945"/>
        <dbReference type="EC" id="1.1.1.105"/>
    </reaction>
    <physiologicalReaction direction="left-to-right" evidence="10">
        <dbReference type="Rhea" id="RHEA:21285"/>
    </physiologicalReaction>
</comment>
<comment type="catalytic activity">
    <reaction evidence="5 6">
        <text>androsterone + NAD(+) = 5alpha-androstan-3,17-dione + NADH + H(+)</text>
        <dbReference type="Rhea" id="RHEA:20381"/>
        <dbReference type="ChEBI" id="CHEBI:15378"/>
        <dbReference type="ChEBI" id="CHEBI:15994"/>
        <dbReference type="ChEBI" id="CHEBI:16032"/>
        <dbReference type="ChEBI" id="CHEBI:57540"/>
        <dbReference type="ChEBI" id="CHEBI:57945"/>
        <dbReference type="EC" id="1.1.1.209"/>
    </reaction>
    <physiologicalReaction direction="left-to-right" evidence="6">
        <dbReference type="Rhea" id="RHEA:20382"/>
    </physiologicalReaction>
    <physiologicalReaction direction="right-to-left" evidence="6">
        <dbReference type="Rhea" id="RHEA:20383"/>
    </physiologicalReaction>
</comment>
<comment type="catalytic activity">
    <reaction evidence="2">
        <text>testosterone + NAD(+) = androst-4-ene-3,17-dione + NADH + H(+)</text>
        <dbReference type="Rhea" id="RHEA:14929"/>
        <dbReference type="ChEBI" id="CHEBI:15378"/>
        <dbReference type="ChEBI" id="CHEBI:16422"/>
        <dbReference type="ChEBI" id="CHEBI:17347"/>
        <dbReference type="ChEBI" id="CHEBI:57540"/>
        <dbReference type="ChEBI" id="CHEBI:57945"/>
        <dbReference type="EC" id="1.1.1.239"/>
    </reaction>
</comment>
<comment type="catalytic activity">
    <reaction evidence="6">
        <text>5alpha-androstane-3alpha,17beta-diol + NAD(+) = 17beta-hydroxy-5alpha-androstan-3-one + NADH + H(+)</text>
        <dbReference type="Rhea" id="RHEA:42004"/>
        <dbReference type="ChEBI" id="CHEBI:15378"/>
        <dbReference type="ChEBI" id="CHEBI:16330"/>
        <dbReference type="ChEBI" id="CHEBI:36713"/>
        <dbReference type="ChEBI" id="CHEBI:57540"/>
        <dbReference type="ChEBI" id="CHEBI:57945"/>
        <dbReference type="EC" id="1.1.1.53"/>
    </reaction>
    <physiologicalReaction direction="right-to-left" evidence="10">
        <dbReference type="Rhea" id="RHEA:42006"/>
    </physiologicalReaction>
</comment>
<comment type="catalytic activity">
    <reaction evidence="2">
        <text>17beta-estradiol + NAD(+) = estrone + NADH + H(+)</text>
        <dbReference type="Rhea" id="RHEA:24612"/>
        <dbReference type="ChEBI" id="CHEBI:15378"/>
        <dbReference type="ChEBI" id="CHEBI:16469"/>
        <dbReference type="ChEBI" id="CHEBI:17263"/>
        <dbReference type="ChEBI" id="CHEBI:57540"/>
        <dbReference type="ChEBI" id="CHEBI:57945"/>
        <dbReference type="EC" id="1.1.1.62"/>
    </reaction>
</comment>
<comment type="catalytic activity">
    <reaction evidence="2">
        <text>17beta-estradiol + NADP(+) = estrone + NADPH + H(+)</text>
        <dbReference type="Rhea" id="RHEA:24616"/>
        <dbReference type="ChEBI" id="CHEBI:15378"/>
        <dbReference type="ChEBI" id="CHEBI:16469"/>
        <dbReference type="ChEBI" id="CHEBI:17263"/>
        <dbReference type="ChEBI" id="CHEBI:57783"/>
        <dbReference type="ChEBI" id="CHEBI:58349"/>
        <dbReference type="EC" id="1.1.1.62"/>
    </reaction>
</comment>
<comment type="catalytic activity">
    <reaction evidence="5 6">
        <text>3alpha-hydroxy-5alpha-pregnan-20-one + NAD(+) = 5alpha-pregnane-3,20-dione + NADH + H(+)</text>
        <dbReference type="Rhea" id="RHEA:41980"/>
        <dbReference type="ChEBI" id="CHEBI:15378"/>
        <dbReference type="ChEBI" id="CHEBI:28952"/>
        <dbReference type="ChEBI" id="CHEBI:50169"/>
        <dbReference type="ChEBI" id="CHEBI:57540"/>
        <dbReference type="ChEBI" id="CHEBI:57945"/>
    </reaction>
    <physiologicalReaction direction="left-to-right" evidence="10">
        <dbReference type="Rhea" id="RHEA:41981"/>
    </physiologicalReaction>
</comment>
<comment type="catalytic activity">
    <reaction evidence="6">
        <text>5alpha-androstane-3beta,17beta-diol + NAD(+) = 17beta-hydroxy-5alpha-androstan-3-one + NADH + H(+)</text>
        <dbReference type="Rhea" id="RHEA:42184"/>
        <dbReference type="ChEBI" id="CHEBI:15378"/>
        <dbReference type="ChEBI" id="CHEBI:16330"/>
        <dbReference type="ChEBI" id="CHEBI:18329"/>
        <dbReference type="ChEBI" id="CHEBI:57540"/>
        <dbReference type="ChEBI" id="CHEBI:57945"/>
    </reaction>
    <physiologicalReaction direction="right-to-left" evidence="10">
        <dbReference type="Rhea" id="RHEA:42186"/>
    </physiologicalReaction>
</comment>
<comment type="catalytic activity">
    <reaction evidence="5 6 7">
        <text>3beta-hydroxy-5alpha-androstan-17-one + NAD(+) = 5alpha-androstan-3,17-dione + NADH + H(+)</text>
        <dbReference type="Rhea" id="RHEA:42188"/>
        <dbReference type="ChEBI" id="CHEBI:15378"/>
        <dbReference type="ChEBI" id="CHEBI:15994"/>
        <dbReference type="ChEBI" id="CHEBI:57540"/>
        <dbReference type="ChEBI" id="CHEBI:57945"/>
        <dbReference type="ChEBI" id="CHEBI:541975"/>
    </reaction>
    <physiologicalReaction direction="right-to-left" evidence="10">
        <dbReference type="Rhea" id="RHEA:42190"/>
    </physiologicalReaction>
</comment>
<comment type="biophysicochemical properties">
    <kinetics>
        <KM evidence="5 6">0.19 uM for NAD</KM>
        <KM evidence="5 6">0.18 uM for NADH</KM>
        <KM evidence="5 6">54 uM for NADPH</KM>
        <KM evidence="5 6">940 uM for NADP</KM>
        <KM evidence="5 6">3.2 uM for all-trans-retinol</KM>
        <KM evidence="5 6">0.24 uM for allopregnanolone</KM>
        <KM evidence="5 6">0.13 uM for 3-alpha-androstanediol</KM>
        <KM evidence="5 6">0.23 uM for androsterone</KM>
        <KM evidence="5 6">0.13 uM for dehydroepiandrosterone</KM>
        <Vmax evidence="5 6">1.2 nmol/min/mg enzyme with all-trans-retinol</Vmax>
        <Vmax evidence="5 6">14.7 nmol/min/mg enzyme with allopregnanolone</Vmax>
        <Vmax evidence="5 6">16.5 nmol/min/mg enzyme with 3-alpha-androstanediol</Vmax>
        <Vmax evidence="5 6">35.0 nmol/min/mg enzyme with androsterone</Vmax>
        <Vmax evidence="5 6">0.9 nmol/min/mg enzyme with dehydroepiandrosterone</Vmax>
        <text>The kinetic parameters were determined using microsomes from transfected cells.</text>
    </kinetics>
</comment>
<comment type="subcellular location">
    <subcellularLocation>
        <location evidence="6">Microsome membrane</location>
        <topology evidence="6">Peripheral membrane protein</topology>
        <orientation evidence="6">Lumenal side</orientation>
    </subcellularLocation>
    <subcellularLocation>
        <location evidence="9">Early endosome membrane</location>
        <topology evidence="9">Peripheral membrane protein</topology>
        <orientation evidence="9">Lumenal side</orientation>
    </subcellularLocation>
</comment>
<comment type="tissue specificity">
    <text evidence="5 8">Detected in liver and prostate (at protein level). Detected in adult liver, lung, brain, placenta, prostate, adrenal gland, testis, mammary gland, spleen, spinal cord and uterus. Detected in caudate nucleus, and at lower levels in amygdala, corpus callosum, hippocampus, substantia nigra and thalamus. Detected in fetal lung, liver and brain.</text>
</comment>
<comment type="similarity">
    <text evidence="9">Belongs to the short-chain dehydrogenases/reductases (SDR) family.</text>
</comment>
<comment type="sequence caution" evidence="9">
    <conflict type="frameshift">
        <sequence resource="EMBL-CDS" id="AAB88252"/>
    </conflict>
</comment>
<organism>
    <name type="scientific">Homo sapiens</name>
    <name type="common">Human</name>
    <dbReference type="NCBI Taxonomy" id="9606"/>
    <lineage>
        <taxon>Eukaryota</taxon>
        <taxon>Metazoa</taxon>
        <taxon>Chordata</taxon>
        <taxon>Craniata</taxon>
        <taxon>Vertebrata</taxon>
        <taxon>Euteleostomi</taxon>
        <taxon>Mammalia</taxon>
        <taxon>Eutheria</taxon>
        <taxon>Euarchontoglires</taxon>
        <taxon>Primates</taxon>
        <taxon>Haplorrhini</taxon>
        <taxon>Catarrhini</taxon>
        <taxon>Hominidae</taxon>
        <taxon>Homo</taxon>
    </lineage>
</organism>
<dbReference type="EC" id="1.1.1.105" evidence="5 6"/>
<dbReference type="EC" id="1.1.1.209" evidence="5 6"/>
<dbReference type="EC" id="1.1.1.239" evidence="2"/>
<dbReference type="EC" id="1.1.1.53" evidence="6"/>
<dbReference type="EC" id="1.1.1.62" evidence="2"/>
<dbReference type="EMBL" id="U89281">
    <property type="protein sequence ID" value="AAB88252.1"/>
    <property type="status" value="ALT_FRAME"/>
    <property type="molecule type" value="mRNA"/>
</dbReference>
<dbReference type="EMBL" id="AF016509">
    <property type="protein sequence ID" value="AAB67236.1"/>
    <property type="molecule type" value="mRNA"/>
</dbReference>
<dbReference type="EMBL" id="AF223225">
    <property type="protein sequence ID" value="AAF81017.1"/>
    <property type="molecule type" value="mRNA"/>
</dbReference>
<dbReference type="EMBL" id="BC020710">
    <property type="protein sequence ID" value="AAH20710.1"/>
    <property type="molecule type" value="mRNA"/>
</dbReference>
<dbReference type="CCDS" id="CCDS8925.1"/>
<dbReference type="RefSeq" id="NP_003716.2">
    <property type="nucleotide sequence ID" value="NM_003725.3"/>
</dbReference>
<dbReference type="RefSeq" id="XP_005269264.1">
    <property type="nucleotide sequence ID" value="XM_005269207.1"/>
</dbReference>
<dbReference type="RefSeq" id="XP_005269265.1">
    <property type="nucleotide sequence ID" value="XM_005269208.2"/>
</dbReference>
<dbReference type="RefSeq" id="XP_005269266.1">
    <property type="nucleotide sequence ID" value="XM_005269209.1"/>
</dbReference>
<dbReference type="RefSeq" id="XP_006719735.1">
    <property type="nucleotide sequence ID" value="XM_006719672.2"/>
</dbReference>
<dbReference type="RefSeq" id="XP_011537227.1">
    <property type="nucleotide sequence ID" value="XM_011538925.1"/>
</dbReference>
<dbReference type="RefSeq" id="XP_011537228.1">
    <property type="nucleotide sequence ID" value="XM_011538926.1"/>
</dbReference>
<dbReference type="RefSeq" id="XP_011537229.1">
    <property type="nucleotide sequence ID" value="XM_011538927.2"/>
</dbReference>
<dbReference type="RefSeq" id="XP_054229669.1">
    <property type="nucleotide sequence ID" value="XM_054373694.1"/>
</dbReference>
<dbReference type="RefSeq" id="XP_054229670.1">
    <property type="nucleotide sequence ID" value="XM_054373695.1"/>
</dbReference>
<dbReference type="RefSeq" id="XP_054229671.1">
    <property type="nucleotide sequence ID" value="XM_054373696.1"/>
</dbReference>
<dbReference type="RefSeq" id="XP_054229672.1">
    <property type="nucleotide sequence ID" value="XM_054373697.1"/>
</dbReference>
<dbReference type="RefSeq" id="XP_054229673.1">
    <property type="nucleotide sequence ID" value="XM_054373698.1"/>
</dbReference>
<dbReference type="RefSeq" id="XP_054229674.1">
    <property type="nucleotide sequence ID" value="XM_054373699.1"/>
</dbReference>
<dbReference type="RefSeq" id="XP_054229675.1">
    <property type="nucleotide sequence ID" value="XM_054373700.1"/>
</dbReference>
<dbReference type="SMR" id="O14756"/>
<dbReference type="BioGRID" id="114183">
    <property type="interactions" value="45"/>
</dbReference>
<dbReference type="FunCoup" id="O14756">
    <property type="interactions" value="652"/>
</dbReference>
<dbReference type="IntAct" id="O14756">
    <property type="interactions" value="12"/>
</dbReference>
<dbReference type="STRING" id="9606.ENSP00000451406"/>
<dbReference type="DrugCentral" id="O14756"/>
<dbReference type="SwissLipids" id="SLP:000000807"/>
<dbReference type="GlyCosmos" id="O14756">
    <property type="glycosylation" value="3 sites, No reported glycans"/>
</dbReference>
<dbReference type="GlyGen" id="O14756">
    <property type="glycosylation" value="4 sites, 1 O-linked glycan (1 site)"/>
</dbReference>
<dbReference type="iPTMnet" id="O14756"/>
<dbReference type="PhosphoSitePlus" id="O14756"/>
<dbReference type="BioMuta" id="HSD17B6"/>
<dbReference type="MassIVE" id="O14756"/>
<dbReference type="PaxDb" id="9606-ENSP00000451406"/>
<dbReference type="PeptideAtlas" id="O14756"/>
<dbReference type="ProteomicsDB" id="48207"/>
<dbReference type="Antibodypedia" id="16013">
    <property type="antibodies" value="127 antibodies from 29 providers"/>
</dbReference>
<dbReference type="DNASU" id="8630"/>
<dbReference type="Ensembl" id="ENST00000322165.1">
    <property type="protein sequence ID" value="ENSP00000318631.1"/>
    <property type="gene ID" value="ENSG00000025423.11"/>
</dbReference>
<dbReference type="Ensembl" id="ENST00000554150.5">
    <property type="protein sequence ID" value="ENSP00000452273.1"/>
    <property type="gene ID" value="ENSG00000025423.11"/>
</dbReference>
<dbReference type="Ensembl" id="ENST00000554643.5">
    <property type="protein sequence ID" value="ENSP00000451406.1"/>
    <property type="gene ID" value="ENSG00000025423.11"/>
</dbReference>
<dbReference type="Ensembl" id="ENST00000555159.5">
    <property type="protein sequence ID" value="ENSP00000450698.1"/>
    <property type="gene ID" value="ENSG00000025423.11"/>
</dbReference>
<dbReference type="Ensembl" id="ENST00000555805.5">
    <property type="protein sequence ID" value="ENSP00000451753.1"/>
    <property type="gene ID" value="ENSG00000025423.11"/>
</dbReference>
<dbReference type="GeneID" id="8630"/>
<dbReference type="KEGG" id="hsa:8630"/>
<dbReference type="MANE-Select" id="ENST00000322165.1">
    <property type="protein sequence ID" value="ENSP00000318631.1"/>
    <property type="RefSeq nucleotide sequence ID" value="NM_003725.4"/>
    <property type="RefSeq protein sequence ID" value="NP_003716.2"/>
</dbReference>
<dbReference type="UCSC" id="uc001smg.3">
    <property type="organism name" value="human"/>
</dbReference>
<dbReference type="AGR" id="HGNC:23316"/>
<dbReference type="CTD" id="8630"/>
<dbReference type="DisGeNET" id="8630"/>
<dbReference type="GeneCards" id="HSD17B6"/>
<dbReference type="HGNC" id="HGNC:23316">
    <property type="gene designation" value="HSD17B6"/>
</dbReference>
<dbReference type="HPA" id="ENSG00000025423">
    <property type="expression patterns" value="Tissue enriched (liver)"/>
</dbReference>
<dbReference type="MIM" id="606623">
    <property type="type" value="gene"/>
</dbReference>
<dbReference type="neXtProt" id="NX_O14756"/>
<dbReference type="OpenTargets" id="ENSG00000025423"/>
<dbReference type="PharmGKB" id="PA142671671"/>
<dbReference type="VEuPathDB" id="HostDB:ENSG00000025423"/>
<dbReference type="eggNOG" id="KOG1610">
    <property type="taxonomic scope" value="Eukaryota"/>
</dbReference>
<dbReference type="GeneTree" id="ENSGT00940000162028"/>
<dbReference type="HOGENOM" id="CLU_010194_2_0_1"/>
<dbReference type="InParanoid" id="O14756"/>
<dbReference type="OMA" id="FFDAYHD"/>
<dbReference type="OrthoDB" id="5296at2759"/>
<dbReference type="PAN-GO" id="O14756">
    <property type="GO annotations" value="5 GO annotations based on evolutionary models"/>
</dbReference>
<dbReference type="PhylomeDB" id="O14756"/>
<dbReference type="TreeFam" id="TF325617"/>
<dbReference type="BRENDA" id="1.1.1.62">
    <property type="organism ID" value="2681"/>
</dbReference>
<dbReference type="PathwayCommons" id="O14756"/>
<dbReference type="Reactome" id="R-HSA-2453902">
    <property type="pathway name" value="The canonical retinoid cycle in rods (twilight vision)"/>
</dbReference>
<dbReference type="SABIO-RK" id="O14756"/>
<dbReference type="SignaLink" id="O14756"/>
<dbReference type="BioGRID-ORCS" id="8630">
    <property type="hits" value="8 hits in 1149 CRISPR screens"/>
</dbReference>
<dbReference type="ChiTaRS" id="HSD17B6">
    <property type="organism name" value="human"/>
</dbReference>
<dbReference type="GeneWiki" id="HSD17B6"/>
<dbReference type="GenomeRNAi" id="8630"/>
<dbReference type="Pharos" id="O14756">
    <property type="development level" value="Tbio"/>
</dbReference>
<dbReference type="PRO" id="PR:O14756"/>
<dbReference type="Proteomes" id="UP000005640">
    <property type="component" value="Chromosome 12"/>
</dbReference>
<dbReference type="RNAct" id="O14756">
    <property type="molecule type" value="protein"/>
</dbReference>
<dbReference type="Bgee" id="ENSG00000025423">
    <property type="expression patterns" value="Expressed in right lobe of liver and 157 other cell types or tissues"/>
</dbReference>
<dbReference type="ExpressionAtlas" id="O14756">
    <property type="expression patterns" value="baseline and differential"/>
</dbReference>
<dbReference type="GO" id="GO:0031901">
    <property type="term" value="C:early endosome membrane"/>
    <property type="evidence" value="ECO:0007669"/>
    <property type="project" value="UniProtKB-SubCell"/>
</dbReference>
<dbReference type="GO" id="GO:0005783">
    <property type="term" value="C:endoplasmic reticulum"/>
    <property type="evidence" value="ECO:0007669"/>
    <property type="project" value="UniProtKB-KW"/>
</dbReference>
<dbReference type="GO" id="GO:0043231">
    <property type="term" value="C:intracellular membrane-bounded organelle"/>
    <property type="evidence" value="ECO:0000318"/>
    <property type="project" value="GO_Central"/>
</dbReference>
<dbReference type="GO" id="GO:0047024">
    <property type="term" value="F:5-alpha-androstane-3-beta,17-beta-diol dehydrogenase (NADP+) activity"/>
    <property type="evidence" value="ECO:0000314"/>
    <property type="project" value="UniProtKB"/>
</dbReference>
<dbReference type="GO" id="GO:0004745">
    <property type="term" value="F:all-trans-retinol dehydrogenase (NAD+) activity"/>
    <property type="evidence" value="ECO:0000314"/>
    <property type="project" value="UniProtKB"/>
</dbReference>
<dbReference type="GO" id="GO:0047044">
    <property type="term" value="F:androstan-3-alpha,17-beta-diol dehydrogenase (NAD+) activity"/>
    <property type="evidence" value="ECO:0000314"/>
    <property type="project" value="UniProtKB"/>
</dbReference>
<dbReference type="GO" id="GO:0047023">
    <property type="term" value="F:androsterone dehydrogenase [NAD(P)+] activity"/>
    <property type="evidence" value="ECO:0000314"/>
    <property type="project" value="UniProtKB"/>
</dbReference>
<dbReference type="GO" id="GO:0003824">
    <property type="term" value="F:catalytic activity"/>
    <property type="evidence" value="ECO:0000304"/>
    <property type="project" value="ProtInc"/>
</dbReference>
<dbReference type="GO" id="GO:0009055">
    <property type="term" value="F:electron transfer activity"/>
    <property type="evidence" value="ECO:0000304"/>
    <property type="project" value="UniProtKB"/>
</dbReference>
<dbReference type="GO" id="GO:0004303">
    <property type="term" value="F:estradiol 17-beta-dehydrogenase [NAD(P)+] activity"/>
    <property type="evidence" value="ECO:0007669"/>
    <property type="project" value="UniProtKB-EC"/>
</dbReference>
<dbReference type="GO" id="GO:0016491">
    <property type="term" value="F:oxidoreductase activity"/>
    <property type="evidence" value="ECO:0000303"/>
    <property type="project" value="UniProtKB"/>
</dbReference>
<dbReference type="GO" id="GO:0047045">
    <property type="term" value="F:testosterone 17-beta-dehydrogenase (NADP+) activity"/>
    <property type="evidence" value="ECO:0007669"/>
    <property type="project" value="Ensembl"/>
</dbReference>
<dbReference type="GO" id="GO:0047035">
    <property type="term" value="F:testosterone dehydrogenase (NAD+) activity"/>
    <property type="evidence" value="ECO:0007669"/>
    <property type="project" value="UniProtKB-EC"/>
</dbReference>
<dbReference type="GO" id="GO:0006702">
    <property type="term" value="P:androgen biosynthetic process"/>
    <property type="evidence" value="ECO:0000303"/>
    <property type="project" value="UniProtKB"/>
</dbReference>
<dbReference type="GO" id="GO:0006710">
    <property type="term" value="P:androgen catabolic process"/>
    <property type="evidence" value="ECO:0000304"/>
    <property type="project" value="UniProtKB"/>
</dbReference>
<dbReference type="GO" id="GO:0062175">
    <property type="term" value="P:brexanolone catabolic process"/>
    <property type="evidence" value="ECO:0000314"/>
    <property type="project" value="UniProtKB"/>
</dbReference>
<dbReference type="GO" id="GO:0042572">
    <property type="term" value="P:retinol metabolic process"/>
    <property type="evidence" value="ECO:0000318"/>
    <property type="project" value="GO_Central"/>
</dbReference>
<dbReference type="GO" id="GO:0008202">
    <property type="term" value="P:steroid metabolic process"/>
    <property type="evidence" value="ECO:0000318"/>
    <property type="project" value="GO_Central"/>
</dbReference>
<dbReference type="CDD" id="cd09805">
    <property type="entry name" value="type2_17beta_HSD-like_SDR_c"/>
    <property type="match status" value="1"/>
</dbReference>
<dbReference type="FunFam" id="3.40.50.720:FF:000074">
    <property type="entry name" value="Retinol dehydrogenase type 1"/>
    <property type="match status" value="1"/>
</dbReference>
<dbReference type="Gene3D" id="3.40.50.720">
    <property type="entry name" value="NAD(P)-binding Rossmann-like Domain"/>
    <property type="match status" value="1"/>
</dbReference>
<dbReference type="InterPro" id="IPR036291">
    <property type="entry name" value="NAD(P)-bd_dom_sf"/>
</dbReference>
<dbReference type="InterPro" id="IPR020904">
    <property type="entry name" value="Sc_DH/Rdtase_CS"/>
</dbReference>
<dbReference type="InterPro" id="IPR002347">
    <property type="entry name" value="SDR_fam"/>
</dbReference>
<dbReference type="PANTHER" id="PTHR43313:SF4">
    <property type="entry name" value="17-BETA-HYDROXYSTEROID DEHYDROGENASE TYPE 6"/>
    <property type="match status" value="1"/>
</dbReference>
<dbReference type="PANTHER" id="PTHR43313">
    <property type="entry name" value="SHORT-CHAIN DEHYDROGENASE/REDUCTASE FAMILY 9C"/>
    <property type="match status" value="1"/>
</dbReference>
<dbReference type="Pfam" id="PF00106">
    <property type="entry name" value="adh_short"/>
    <property type="match status" value="1"/>
</dbReference>
<dbReference type="PRINTS" id="PR00081">
    <property type="entry name" value="GDHRDH"/>
</dbReference>
<dbReference type="PRINTS" id="PR00080">
    <property type="entry name" value="SDRFAMILY"/>
</dbReference>
<dbReference type="SUPFAM" id="SSF51735">
    <property type="entry name" value="NAD(P)-binding Rossmann-fold domains"/>
    <property type="match status" value="1"/>
</dbReference>
<dbReference type="PROSITE" id="PS00061">
    <property type="entry name" value="ADH_SHORT"/>
    <property type="match status" value="1"/>
</dbReference>
<sequence length="317" mass="35966">MWLYLAAFVGLYYLLHWYRERQVVSHLQDKYVFITGCDSGFGNLLARQLDARGLRVLAACLTEKGAEQLRGQTSDRLETVTLDVTKMESIAAATQWVKEHVGDRGLWGLVNNAGILTPITLCEWLNTEDSMNMLKVNLIGVIQVTLSMLPLVRRARGRIVNVSSILGRVAFFVGGYCVSKYGVEAFSDILRREIQHFGVKISIVEPGYFRTGMTNMTQSLERMKQSWKEAPKHIKETYGQQYFDALYNIMKEGLLNCSTNLNLVTDCMEHALTSVHPRTRYSAGWDAKFFFIPLSYLPTSLADYILTRSWPKPAQAV</sequence>
<proteinExistence type="evidence at protein level"/>
<evidence type="ECO:0000250" key="1"/>
<evidence type="ECO:0000250" key="2">
    <source>
        <dbReference type="UniProtKB" id="Q9R092"/>
    </source>
</evidence>
<evidence type="ECO:0000255" key="3"/>
<evidence type="ECO:0000255" key="4">
    <source>
        <dbReference type="PROSITE-ProRule" id="PRU10001"/>
    </source>
</evidence>
<evidence type="ECO:0000269" key="5">
    <source>
    </source>
</evidence>
<evidence type="ECO:0000269" key="6">
    <source>
    </source>
</evidence>
<evidence type="ECO:0000269" key="7">
    <source>
    </source>
</evidence>
<evidence type="ECO:0000269" key="8">
    <source>
    </source>
</evidence>
<evidence type="ECO:0000305" key="9"/>
<evidence type="ECO:0000305" key="10">
    <source>
    </source>
</evidence>
<accession>O14756</accession>
<accession>O43275</accession>